<reference key="1">
    <citation type="journal article" date="2003" name="Nucleic Acids Res.">
        <title>Genome sequence of Chlamydophila caviae (Chlamydia psittaci GPIC): examining the role of niche-specific genes in the evolution of the Chlamydiaceae.</title>
        <authorList>
            <person name="Read T.D."/>
            <person name="Myers G.S.A."/>
            <person name="Brunham R.C."/>
            <person name="Nelson W.C."/>
            <person name="Paulsen I.T."/>
            <person name="Heidelberg J.F."/>
            <person name="Holtzapple E.K."/>
            <person name="Khouri H.M."/>
            <person name="Federova N.B."/>
            <person name="Carty H.A."/>
            <person name="Umayam L.A."/>
            <person name="Haft D.H."/>
            <person name="Peterson J.D."/>
            <person name="Beanan M.J."/>
            <person name="White O."/>
            <person name="Salzberg S.L."/>
            <person name="Hsia R.-C."/>
            <person name="McClarty G."/>
            <person name="Rank R.G."/>
            <person name="Bavoil P.M."/>
            <person name="Fraser C.M."/>
        </authorList>
    </citation>
    <scope>NUCLEOTIDE SEQUENCE [LARGE SCALE GENOMIC DNA]</scope>
    <source>
        <strain>ATCC VR-813 / DSM 19441 / 03DC25 / GPIC</strain>
    </source>
</reference>
<evidence type="ECO:0000255" key="1">
    <source>
        <dbReference type="HAMAP-Rule" id="MF_01405"/>
    </source>
</evidence>
<sequence length="206" mass="23018">MKIVIASCHGYKIRETKTFLKQLGSFDIFSLTDFPNYSAPKEIGCLPEENALAKGLHAAKELNSWVIADDTMLMVPALNGLPGKLSATFAGEDACDKDHRKKLLQEMQSLESIVDRSAYFECCIVLASPEGKFFKARGICEGYISNQEKGSSGFGYDSLFLKYDYKQTFAELSEDVKNQVSHRAKALQKLAPYLQNLLEKQLVSRN</sequence>
<proteinExistence type="inferred from homology"/>
<organism>
    <name type="scientific">Chlamydia caviae (strain ATCC VR-813 / DSM 19441 / 03DC25 / GPIC)</name>
    <name type="common">Chlamydophila caviae</name>
    <dbReference type="NCBI Taxonomy" id="227941"/>
    <lineage>
        <taxon>Bacteria</taxon>
        <taxon>Pseudomonadati</taxon>
        <taxon>Chlamydiota</taxon>
        <taxon>Chlamydiia</taxon>
        <taxon>Chlamydiales</taxon>
        <taxon>Chlamydiaceae</taxon>
        <taxon>Chlamydia/Chlamydophila group</taxon>
        <taxon>Chlamydia</taxon>
    </lineage>
</organism>
<accession>Q821F9</accession>
<feature type="chain" id="PRO_0000178148" description="dITP/XTP pyrophosphatase">
    <location>
        <begin position="1"/>
        <end position="206"/>
    </location>
</feature>
<feature type="active site" description="Proton acceptor" evidence="1">
    <location>
        <position position="70"/>
    </location>
</feature>
<feature type="binding site" evidence="1">
    <location>
        <begin position="7"/>
        <end position="12"/>
    </location>
    <ligand>
        <name>substrate</name>
    </ligand>
</feature>
<feature type="binding site" evidence="1">
    <location>
        <position position="70"/>
    </location>
    <ligand>
        <name>Mg(2+)</name>
        <dbReference type="ChEBI" id="CHEBI:18420"/>
    </ligand>
</feature>
<feature type="binding site" evidence="1">
    <location>
        <position position="71"/>
    </location>
    <ligand>
        <name>substrate</name>
    </ligand>
</feature>
<feature type="binding site" evidence="1">
    <location>
        <begin position="154"/>
        <end position="157"/>
    </location>
    <ligand>
        <name>substrate</name>
    </ligand>
</feature>
<feature type="binding site" evidence="1">
    <location>
        <position position="177"/>
    </location>
    <ligand>
        <name>substrate</name>
    </ligand>
</feature>
<feature type="binding site" evidence="1">
    <location>
        <begin position="182"/>
        <end position="183"/>
    </location>
    <ligand>
        <name>substrate</name>
    </ligand>
</feature>
<gene>
    <name type="ordered locus">CCA_00982</name>
</gene>
<name>IXTPA_CHLCV</name>
<keyword id="KW-0378">Hydrolase</keyword>
<keyword id="KW-0460">Magnesium</keyword>
<keyword id="KW-0479">Metal-binding</keyword>
<keyword id="KW-0546">Nucleotide metabolism</keyword>
<keyword id="KW-0547">Nucleotide-binding</keyword>
<comment type="function">
    <text evidence="1">Pyrophosphatase that catalyzes the hydrolysis of nucleoside triphosphates to their monophosphate derivatives, with a high preference for the non-canonical purine nucleotides XTP (xanthosine triphosphate), dITP (deoxyinosine triphosphate) and ITP. Seems to function as a house-cleaning enzyme that removes non-canonical purine nucleotides from the nucleotide pool, thus preventing their incorporation into DNA/RNA and avoiding chromosomal lesions.</text>
</comment>
<comment type="catalytic activity">
    <reaction evidence="1">
        <text>XTP + H2O = XMP + diphosphate + H(+)</text>
        <dbReference type="Rhea" id="RHEA:28610"/>
        <dbReference type="ChEBI" id="CHEBI:15377"/>
        <dbReference type="ChEBI" id="CHEBI:15378"/>
        <dbReference type="ChEBI" id="CHEBI:33019"/>
        <dbReference type="ChEBI" id="CHEBI:57464"/>
        <dbReference type="ChEBI" id="CHEBI:61314"/>
        <dbReference type="EC" id="3.6.1.66"/>
    </reaction>
</comment>
<comment type="catalytic activity">
    <reaction evidence="1">
        <text>dITP + H2O = dIMP + diphosphate + H(+)</text>
        <dbReference type="Rhea" id="RHEA:28342"/>
        <dbReference type="ChEBI" id="CHEBI:15377"/>
        <dbReference type="ChEBI" id="CHEBI:15378"/>
        <dbReference type="ChEBI" id="CHEBI:33019"/>
        <dbReference type="ChEBI" id="CHEBI:61194"/>
        <dbReference type="ChEBI" id="CHEBI:61382"/>
        <dbReference type="EC" id="3.6.1.66"/>
    </reaction>
</comment>
<comment type="catalytic activity">
    <reaction evidence="1">
        <text>ITP + H2O = IMP + diphosphate + H(+)</text>
        <dbReference type="Rhea" id="RHEA:29399"/>
        <dbReference type="ChEBI" id="CHEBI:15377"/>
        <dbReference type="ChEBI" id="CHEBI:15378"/>
        <dbReference type="ChEBI" id="CHEBI:33019"/>
        <dbReference type="ChEBI" id="CHEBI:58053"/>
        <dbReference type="ChEBI" id="CHEBI:61402"/>
        <dbReference type="EC" id="3.6.1.66"/>
    </reaction>
</comment>
<comment type="cofactor">
    <cofactor evidence="1">
        <name>Mg(2+)</name>
        <dbReference type="ChEBI" id="CHEBI:18420"/>
    </cofactor>
    <text evidence="1">Binds 1 Mg(2+) ion per subunit.</text>
</comment>
<comment type="subunit">
    <text evidence="1">Homodimer.</text>
</comment>
<comment type="similarity">
    <text evidence="1">Belongs to the HAM1 NTPase family.</text>
</comment>
<dbReference type="EC" id="3.6.1.66" evidence="1"/>
<dbReference type="EMBL" id="AE015925">
    <property type="protein sequence ID" value="AAP05721.1"/>
    <property type="molecule type" value="Genomic_DNA"/>
</dbReference>
<dbReference type="RefSeq" id="WP_011006934.1">
    <property type="nucleotide sequence ID" value="NC_003361.3"/>
</dbReference>
<dbReference type="SMR" id="Q821F9"/>
<dbReference type="STRING" id="227941.CCA_00982"/>
<dbReference type="KEGG" id="cca:CCA_00982"/>
<dbReference type="eggNOG" id="COG0127">
    <property type="taxonomic scope" value="Bacteria"/>
</dbReference>
<dbReference type="HOGENOM" id="CLU_082080_0_2_0"/>
<dbReference type="OrthoDB" id="9807456at2"/>
<dbReference type="Proteomes" id="UP000002193">
    <property type="component" value="Chromosome"/>
</dbReference>
<dbReference type="GO" id="GO:0005829">
    <property type="term" value="C:cytosol"/>
    <property type="evidence" value="ECO:0007669"/>
    <property type="project" value="TreeGrafter"/>
</dbReference>
<dbReference type="GO" id="GO:0035870">
    <property type="term" value="F:dITP diphosphatase activity"/>
    <property type="evidence" value="ECO:0007669"/>
    <property type="project" value="RHEA"/>
</dbReference>
<dbReference type="GO" id="GO:0036220">
    <property type="term" value="F:ITP diphosphatase activity"/>
    <property type="evidence" value="ECO:0007669"/>
    <property type="project" value="UniProtKB-EC"/>
</dbReference>
<dbReference type="GO" id="GO:0046872">
    <property type="term" value="F:metal ion binding"/>
    <property type="evidence" value="ECO:0007669"/>
    <property type="project" value="UniProtKB-KW"/>
</dbReference>
<dbReference type="GO" id="GO:0000166">
    <property type="term" value="F:nucleotide binding"/>
    <property type="evidence" value="ECO:0007669"/>
    <property type="project" value="UniProtKB-KW"/>
</dbReference>
<dbReference type="GO" id="GO:0017111">
    <property type="term" value="F:ribonucleoside triphosphate phosphatase activity"/>
    <property type="evidence" value="ECO:0007669"/>
    <property type="project" value="InterPro"/>
</dbReference>
<dbReference type="GO" id="GO:0036222">
    <property type="term" value="F:XTP diphosphatase activity"/>
    <property type="evidence" value="ECO:0007669"/>
    <property type="project" value="RHEA"/>
</dbReference>
<dbReference type="GO" id="GO:0009117">
    <property type="term" value="P:nucleotide metabolic process"/>
    <property type="evidence" value="ECO:0007669"/>
    <property type="project" value="UniProtKB-KW"/>
</dbReference>
<dbReference type="GO" id="GO:0009146">
    <property type="term" value="P:purine nucleoside triphosphate catabolic process"/>
    <property type="evidence" value="ECO:0007669"/>
    <property type="project" value="UniProtKB-UniRule"/>
</dbReference>
<dbReference type="CDD" id="cd00515">
    <property type="entry name" value="HAM1"/>
    <property type="match status" value="1"/>
</dbReference>
<dbReference type="FunFam" id="3.90.950.10:FF:000001">
    <property type="entry name" value="dITP/XTP pyrophosphatase"/>
    <property type="match status" value="1"/>
</dbReference>
<dbReference type="Gene3D" id="3.90.950.10">
    <property type="match status" value="1"/>
</dbReference>
<dbReference type="HAMAP" id="MF_01405">
    <property type="entry name" value="Non_canon_purine_NTPase"/>
    <property type="match status" value="1"/>
</dbReference>
<dbReference type="InterPro" id="IPR020922">
    <property type="entry name" value="dITP/XTP_pyrophosphatase"/>
</dbReference>
<dbReference type="InterPro" id="IPR029001">
    <property type="entry name" value="ITPase-like_fam"/>
</dbReference>
<dbReference type="InterPro" id="IPR002637">
    <property type="entry name" value="RdgB/HAM1"/>
</dbReference>
<dbReference type="NCBIfam" id="TIGR00042">
    <property type="entry name" value="RdgB/HAM1 family non-canonical purine NTP pyrophosphatase"/>
    <property type="match status" value="1"/>
</dbReference>
<dbReference type="PANTHER" id="PTHR11067:SF9">
    <property type="entry name" value="INOSINE TRIPHOSPHATE PYROPHOSPHATASE"/>
    <property type="match status" value="1"/>
</dbReference>
<dbReference type="PANTHER" id="PTHR11067">
    <property type="entry name" value="INOSINE TRIPHOSPHATE PYROPHOSPHATASE/HAM1 PROTEIN"/>
    <property type="match status" value="1"/>
</dbReference>
<dbReference type="Pfam" id="PF01725">
    <property type="entry name" value="Ham1p_like"/>
    <property type="match status" value="1"/>
</dbReference>
<dbReference type="SUPFAM" id="SSF52972">
    <property type="entry name" value="ITPase-like"/>
    <property type="match status" value="1"/>
</dbReference>
<protein>
    <recommendedName>
        <fullName evidence="1">dITP/XTP pyrophosphatase</fullName>
        <ecNumber evidence="1">3.6.1.66</ecNumber>
    </recommendedName>
    <alternativeName>
        <fullName evidence="1">Non-canonical purine NTP pyrophosphatase</fullName>
    </alternativeName>
    <alternativeName>
        <fullName evidence="1">Non-standard purine NTP pyrophosphatase</fullName>
    </alternativeName>
    <alternativeName>
        <fullName evidence="1">Nucleoside-triphosphate diphosphatase</fullName>
    </alternativeName>
    <alternativeName>
        <fullName evidence="1">Nucleoside-triphosphate pyrophosphatase</fullName>
        <shortName evidence="1">NTPase</shortName>
    </alternativeName>
</protein>